<evidence type="ECO:0000250" key="1">
    <source>
        <dbReference type="UniProtKB" id="P62917"/>
    </source>
</evidence>
<evidence type="ECO:0000250" key="2">
    <source>
        <dbReference type="UniProtKB" id="P62918"/>
    </source>
</evidence>
<evidence type="ECO:0000256" key="3">
    <source>
        <dbReference type="SAM" id="MobiDB-lite"/>
    </source>
</evidence>
<evidence type="ECO:0000305" key="4"/>
<reference key="1">
    <citation type="submission" date="2007-07" db="EMBL/GenBank/DDBJ databases">
        <authorList>
            <consortium name="NIH - Mammalian Gene Collection (MGC) project"/>
        </authorList>
    </citation>
    <scope>NUCLEOTIDE SEQUENCE [LARGE SCALE MRNA]</scope>
    <source>
        <strain>Crossbred X Angus</strain>
        <tissue>Ileum</tissue>
    </source>
</reference>
<proteinExistence type="evidence at protein level"/>
<organism>
    <name type="scientific">Bos taurus</name>
    <name type="common">Bovine</name>
    <dbReference type="NCBI Taxonomy" id="9913"/>
    <lineage>
        <taxon>Eukaryota</taxon>
        <taxon>Metazoa</taxon>
        <taxon>Chordata</taxon>
        <taxon>Craniata</taxon>
        <taxon>Vertebrata</taxon>
        <taxon>Euteleostomi</taxon>
        <taxon>Mammalia</taxon>
        <taxon>Eutheria</taxon>
        <taxon>Laurasiatheria</taxon>
        <taxon>Artiodactyla</taxon>
        <taxon>Ruminantia</taxon>
        <taxon>Pecora</taxon>
        <taxon>Bovidae</taxon>
        <taxon>Bovinae</taxon>
        <taxon>Bos</taxon>
    </lineage>
</organism>
<dbReference type="EMBL" id="BC102277">
    <property type="protein sequence ID" value="AAI02278.1"/>
    <property type="molecule type" value="mRNA"/>
</dbReference>
<dbReference type="EMBL" id="BC151407">
    <property type="protein sequence ID" value="AAI51408.1"/>
    <property type="molecule type" value="mRNA"/>
</dbReference>
<dbReference type="RefSeq" id="NP_001029797.1">
    <property type="nucleotide sequence ID" value="NM_001034625.2"/>
</dbReference>
<dbReference type="RefSeq" id="XP_005215277.1">
    <property type="nucleotide sequence ID" value="XM_005215220.2"/>
</dbReference>
<dbReference type="PDB" id="7NWH">
    <property type="method" value="EM"/>
    <property type="resolution" value="4.10 A"/>
    <property type="chains" value="A=1-249"/>
</dbReference>
<dbReference type="PDBsum" id="7NWH"/>
<dbReference type="EMDB" id="EMD-12632"/>
<dbReference type="SMR" id="Q3T0S6"/>
<dbReference type="FunCoup" id="Q3T0S6">
    <property type="interactions" value="2388"/>
</dbReference>
<dbReference type="STRING" id="9913.ENSBTAP00000037200"/>
<dbReference type="PaxDb" id="9913-ENSBTAP00000037200"/>
<dbReference type="PeptideAtlas" id="Q3T0S6"/>
<dbReference type="Ensembl" id="ENSBTAT00000037367.5">
    <property type="protein sequence ID" value="ENSBTAP00000037200.3"/>
    <property type="gene ID" value="ENSBTAG00000026327.5"/>
</dbReference>
<dbReference type="GeneID" id="535056"/>
<dbReference type="KEGG" id="bta:535056"/>
<dbReference type="CTD" id="6132"/>
<dbReference type="VEuPathDB" id="HostDB:ENSBTAG00000026327"/>
<dbReference type="eggNOG" id="KOG2309">
    <property type="taxonomic scope" value="Eukaryota"/>
</dbReference>
<dbReference type="GeneTree" id="ENSGT00940000153244"/>
<dbReference type="HOGENOM" id="CLU_036235_0_3_1"/>
<dbReference type="InParanoid" id="Q3T0S6"/>
<dbReference type="OMA" id="GGRHPCT"/>
<dbReference type="OrthoDB" id="10267824at2759"/>
<dbReference type="TreeFam" id="TF300748"/>
<dbReference type="Reactome" id="R-BTA-156827">
    <property type="pathway name" value="L13a-mediated translational silencing of Ceruloplasmin expression"/>
</dbReference>
<dbReference type="Reactome" id="R-BTA-1799339">
    <property type="pathway name" value="SRP-dependent cotranslational protein targeting to membrane"/>
</dbReference>
<dbReference type="Reactome" id="R-BTA-6791226">
    <property type="pathway name" value="Major pathway of rRNA processing in the nucleolus and cytosol"/>
</dbReference>
<dbReference type="Reactome" id="R-BTA-72689">
    <property type="pathway name" value="Formation of a pool of free 40S subunits"/>
</dbReference>
<dbReference type="Reactome" id="R-BTA-72706">
    <property type="pathway name" value="GTP hydrolysis and joining of the 60S ribosomal subunit"/>
</dbReference>
<dbReference type="Reactome" id="R-BTA-9629569">
    <property type="pathway name" value="Protein hydroxylation"/>
</dbReference>
<dbReference type="Reactome" id="R-BTA-975956">
    <property type="pathway name" value="Nonsense Mediated Decay (NMD) independent of the Exon Junction Complex (EJC)"/>
</dbReference>
<dbReference type="Reactome" id="R-BTA-975957">
    <property type="pathway name" value="Nonsense Mediated Decay (NMD) enhanced by the Exon Junction Complex (EJC)"/>
</dbReference>
<dbReference type="CD-CODE" id="D7FE2080">
    <property type="entry name" value="Nucleolus"/>
</dbReference>
<dbReference type="Proteomes" id="UP000009136">
    <property type="component" value="Chromosome 14"/>
</dbReference>
<dbReference type="Bgee" id="ENSBTAG00000026327">
    <property type="expression patterns" value="Expressed in ileocecal valve and 107 other cell types or tissues"/>
</dbReference>
<dbReference type="GO" id="GO:0022625">
    <property type="term" value="C:cytosolic large ribosomal subunit"/>
    <property type="evidence" value="ECO:0000318"/>
    <property type="project" value="GO_Central"/>
</dbReference>
<dbReference type="GO" id="GO:0043231">
    <property type="term" value="C:intracellular membrane-bounded organelle"/>
    <property type="evidence" value="ECO:0007669"/>
    <property type="project" value="UniProtKB-ARBA"/>
</dbReference>
<dbReference type="GO" id="GO:0031090">
    <property type="term" value="C:organelle membrane"/>
    <property type="evidence" value="ECO:0007669"/>
    <property type="project" value="UniProtKB-ARBA"/>
</dbReference>
<dbReference type="GO" id="GO:0003723">
    <property type="term" value="F:RNA binding"/>
    <property type="evidence" value="ECO:0000318"/>
    <property type="project" value="GO_Central"/>
</dbReference>
<dbReference type="GO" id="GO:0019843">
    <property type="term" value="F:rRNA binding"/>
    <property type="evidence" value="ECO:0007669"/>
    <property type="project" value="UniProtKB-KW"/>
</dbReference>
<dbReference type="GO" id="GO:0003735">
    <property type="term" value="F:structural constituent of ribosome"/>
    <property type="evidence" value="ECO:0000318"/>
    <property type="project" value="GO_Central"/>
</dbReference>
<dbReference type="GO" id="GO:0002181">
    <property type="term" value="P:cytoplasmic translation"/>
    <property type="evidence" value="ECO:0000318"/>
    <property type="project" value="GO_Central"/>
</dbReference>
<dbReference type="FunFam" id="4.10.950.10:FF:000002">
    <property type="entry name" value="60S ribosomal protein L2"/>
    <property type="match status" value="1"/>
</dbReference>
<dbReference type="FunFam" id="2.30.30.30:FF:000006">
    <property type="entry name" value="60S ribosomal protein L8"/>
    <property type="match status" value="1"/>
</dbReference>
<dbReference type="FunFam" id="2.40.50.140:FF:000581">
    <property type="entry name" value="Ribosomal protein L8"/>
    <property type="match status" value="1"/>
</dbReference>
<dbReference type="Gene3D" id="2.30.30.30">
    <property type="match status" value="1"/>
</dbReference>
<dbReference type="Gene3D" id="2.40.50.140">
    <property type="entry name" value="Nucleic acid-binding proteins"/>
    <property type="match status" value="1"/>
</dbReference>
<dbReference type="Gene3D" id="4.10.950.10">
    <property type="entry name" value="Ribosomal protein L2, domain 3"/>
    <property type="match status" value="1"/>
</dbReference>
<dbReference type="HAMAP" id="MF_01320_A">
    <property type="entry name" value="Ribosomal_uL2_A"/>
    <property type="match status" value="1"/>
</dbReference>
<dbReference type="InterPro" id="IPR012340">
    <property type="entry name" value="NA-bd_OB-fold"/>
</dbReference>
<dbReference type="InterPro" id="IPR014722">
    <property type="entry name" value="Rib_uL2_dom2"/>
</dbReference>
<dbReference type="InterPro" id="IPR002171">
    <property type="entry name" value="Ribosomal_uL2"/>
</dbReference>
<dbReference type="InterPro" id="IPR023672">
    <property type="entry name" value="Ribosomal_uL2_arc_euk"/>
</dbReference>
<dbReference type="InterPro" id="IPR022669">
    <property type="entry name" value="Ribosomal_uL2_C"/>
</dbReference>
<dbReference type="InterPro" id="IPR022671">
    <property type="entry name" value="Ribosomal_uL2_CS"/>
</dbReference>
<dbReference type="InterPro" id="IPR014726">
    <property type="entry name" value="Ribosomal_uL2_dom3"/>
</dbReference>
<dbReference type="InterPro" id="IPR022666">
    <property type="entry name" value="Ribosomal_uL2_RNA-bd_dom"/>
</dbReference>
<dbReference type="InterPro" id="IPR008991">
    <property type="entry name" value="Translation_prot_SH3-like_sf"/>
</dbReference>
<dbReference type="NCBIfam" id="NF007180">
    <property type="entry name" value="PRK09612.1"/>
    <property type="match status" value="1"/>
</dbReference>
<dbReference type="PANTHER" id="PTHR13691:SF16">
    <property type="entry name" value="LARGE RIBOSOMAL SUBUNIT PROTEIN UL2"/>
    <property type="match status" value="1"/>
</dbReference>
<dbReference type="PANTHER" id="PTHR13691">
    <property type="entry name" value="RIBOSOMAL PROTEIN L2"/>
    <property type="match status" value="1"/>
</dbReference>
<dbReference type="Pfam" id="PF00181">
    <property type="entry name" value="Ribosomal_L2"/>
    <property type="match status" value="1"/>
</dbReference>
<dbReference type="Pfam" id="PF03947">
    <property type="entry name" value="Ribosomal_L2_C"/>
    <property type="match status" value="1"/>
</dbReference>
<dbReference type="PIRSF" id="PIRSF002158">
    <property type="entry name" value="Ribosomal_L2"/>
    <property type="match status" value="1"/>
</dbReference>
<dbReference type="SMART" id="SM01383">
    <property type="entry name" value="Ribosomal_L2"/>
    <property type="match status" value="1"/>
</dbReference>
<dbReference type="SMART" id="SM01382">
    <property type="entry name" value="Ribosomal_L2_C"/>
    <property type="match status" value="1"/>
</dbReference>
<dbReference type="SUPFAM" id="SSF50249">
    <property type="entry name" value="Nucleic acid-binding proteins"/>
    <property type="match status" value="1"/>
</dbReference>
<dbReference type="SUPFAM" id="SSF50104">
    <property type="entry name" value="Translation proteins SH3-like domain"/>
    <property type="match status" value="1"/>
</dbReference>
<dbReference type="PROSITE" id="PS00467">
    <property type="entry name" value="RIBOSOMAL_L2"/>
    <property type="match status" value="1"/>
</dbReference>
<comment type="function">
    <text evidence="1">Component of the large ribosomal subunit. The ribosome is a large ribonucleoprotein complex responsible for the synthesis of proteins in the cell.</text>
</comment>
<comment type="subunit">
    <text evidence="1 2">Component of the large ribosomal subunit (By similarity). Interacts with CRY1 (By similarity).</text>
</comment>
<comment type="subcellular location">
    <subcellularLocation>
        <location evidence="1">Cytoplasm</location>
    </subcellularLocation>
</comment>
<comment type="PTM">
    <text evidence="1">Hydroxylated on His-216 by RIOX1. The modification is impaired by hypoxia.</text>
</comment>
<comment type="similarity">
    <text evidence="4">Belongs to the universal ribosomal protein uL2 family.</text>
</comment>
<name>RL8_BOVIN</name>
<keyword id="KW-0002">3D-structure</keyword>
<keyword id="KW-0963">Cytoplasm</keyword>
<keyword id="KW-0379">Hydroxylation</keyword>
<keyword id="KW-1017">Isopeptide bond</keyword>
<keyword id="KW-1185">Reference proteome</keyword>
<keyword id="KW-0687">Ribonucleoprotein</keyword>
<keyword id="KW-0689">Ribosomal protein</keyword>
<keyword id="KW-0694">RNA-binding</keyword>
<keyword id="KW-0699">rRNA-binding</keyword>
<keyword id="KW-0832">Ubl conjugation</keyword>
<gene>
    <name type="primary">RPL8</name>
</gene>
<feature type="chain" id="PRO_0000239849" description="Large ribosomal subunit protein uL2">
    <location>
        <begin position="1"/>
        <end position="257"/>
    </location>
</feature>
<feature type="region of interest" description="Disordered" evidence="3">
    <location>
        <begin position="207"/>
        <end position="232"/>
    </location>
</feature>
<feature type="modified residue" description="(3S)-3-hydroxyhistidine" evidence="1">
    <location>
        <position position="216"/>
    </location>
</feature>
<feature type="cross-link" description="Glycyl lysine isopeptide (Lys-Gly) (interchain with G-Cter in SUMO2)" evidence="1">
    <location>
        <position position="42"/>
    </location>
</feature>
<feature type="cross-link" description="Glycyl lysine isopeptide (Lys-Gly) (interchain with G-Cter in SUMO2)" evidence="1">
    <location>
        <position position="149"/>
    </location>
</feature>
<feature type="cross-link" description="Glycyl lysine isopeptide (Lys-Gly) (interchain with G-Cter in SUMO2)" evidence="1">
    <location>
        <position position="234"/>
    </location>
</feature>
<feature type="cross-link" description="Glycyl lysine isopeptide (Lys-Gly) (interchain with G-Cter in SUMO2)" evidence="1">
    <location>
        <position position="250"/>
    </location>
</feature>
<accession>Q3T0S6</accession>
<accession>B0JYM1</accession>
<sequence>MGRVIRGQRKGAGSVFRAHVKHRKGAARLRAVDFAERHGYIKGIVKDIIHDPGRGAPLAKVVFRDPYRFKKRTELFIAAEGIHTGQFVYCGKKAQLNIGNVLPVGTMPEGTIVCCLEEKPGDRGKLARASGNYATVISHNPETKKTRVKLPSGSKKVISSANRAVVGVVAGGGRIDKPILKAGRAYHKYKAKRNCWPRVRGVAMNPVEHPFGGGNHQHIGKPSTIRRDAPAGRKVGLIAARRTGRLRGTKTVQEKEN</sequence>
<protein>
    <recommendedName>
        <fullName evidence="4">Large ribosomal subunit protein uL2</fullName>
    </recommendedName>
    <alternativeName>
        <fullName>60S ribosomal protein L8</fullName>
    </alternativeName>
</protein>